<feature type="chain" id="PRO_1000148682" description="Putative septation protein SpoVG">
    <location>
        <begin position="1"/>
        <end position="97"/>
    </location>
</feature>
<name>SP5G_BACC3</name>
<gene>
    <name evidence="1" type="primary">spoVG</name>
    <name type="ordered locus">BCA_0058</name>
</gene>
<accession>C1ESX8</accession>
<protein>
    <recommendedName>
        <fullName evidence="1">Putative septation protein SpoVG</fullName>
    </recommendedName>
    <alternativeName>
        <fullName evidence="1">Stage V sporulation protein G</fullName>
    </alternativeName>
</protein>
<organism>
    <name type="scientific">Bacillus cereus (strain 03BB102)</name>
    <dbReference type="NCBI Taxonomy" id="572264"/>
    <lineage>
        <taxon>Bacteria</taxon>
        <taxon>Bacillati</taxon>
        <taxon>Bacillota</taxon>
        <taxon>Bacilli</taxon>
        <taxon>Bacillales</taxon>
        <taxon>Bacillaceae</taxon>
        <taxon>Bacillus</taxon>
        <taxon>Bacillus cereus group</taxon>
    </lineage>
</organism>
<dbReference type="EMBL" id="CP001407">
    <property type="protein sequence ID" value="ACO28900.1"/>
    <property type="molecule type" value="Genomic_DNA"/>
</dbReference>
<dbReference type="RefSeq" id="WP_000454041.1">
    <property type="nucleotide sequence ID" value="NZ_CP009318.1"/>
</dbReference>
<dbReference type="SMR" id="C1ESX8"/>
<dbReference type="GeneID" id="93011022"/>
<dbReference type="KEGG" id="bcx:BCA_0058"/>
<dbReference type="PATRIC" id="fig|572264.18.peg.111"/>
<dbReference type="Proteomes" id="UP000002210">
    <property type="component" value="Chromosome"/>
</dbReference>
<dbReference type="GO" id="GO:0030436">
    <property type="term" value="P:asexual sporulation"/>
    <property type="evidence" value="ECO:0007669"/>
    <property type="project" value="UniProtKB-UniRule"/>
</dbReference>
<dbReference type="GO" id="GO:0000917">
    <property type="term" value="P:division septum assembly"/>
    <property type="evidence" value="ECO:0007669"/>
    <property type="project" value="UniProtKB-KW"/>
</dbReference>
<dbReference type="GO" id="GO:0030435">
    <property type="term" value="P:sporulation resulting in formation of a cellular spore"/>
    <property type="evidence" value="ECO:0007669"/>
    <property type="project" value="UniProtKB-KW"/>
</dbReference>
<dbReference type="FunFam" id="3.30.1120.40:FF:000001">
    <property type="entry name" value="Putative septation protein SpoVG"/>
    <property type="match status" value="1"/>
</dbReference>
<dbReference type="Gene3D" id="3.30.1120.40">
    <property type="entry name" value="Stage V sporulation protein G"/>
    <property type="match status" value="1"/>
</dbReference>
<dbReference type="HAMAP" id="MF_00819">
    <property type="entry name" value="SpoVG"/>
    <property type="match status" value="1"/>
</dbReference>
<dbReference type="InterPro" id="IPR007170">
    <property type="entry name" value="SpoVG"/>
</dbReference>
<dbReference type="InterPro" id="IPR036751">
    <property type="entry name" value="SpoVG_sf"/>
</dbReference>
<dbReference type="NCBIfam" id="NF009749">
    <property type="entry name" value="PRK13259.1"/>
    <property type="match status" value="1"/>
</dbReference>
<dbReference type="PANTHER" id="PTHR38429">
    <property type="entry name" value="SEPTATION PROTEIN SPOVG-RELATED"/>
    <property type="match status" value="1"/>
</dbReference>
<dbReference type="PANTHER" id="PTHR38429:SF1">
    <property type="entry name" value="SEPTATION PROTEIN SPOVG-RELATED"/>
    <property type="match status" value="1"/>
</dbReference>
<dbReference type="Pfam" id="PF04026">
    <property type="entry name" value="SpoVG"/>
    <property type="match status" value="1"/>
</dbReference>
<dbReference type="SUPFAM" id="SSF160537">
    <property type="entry name" value="SpoVG-like"/>
    <property type="match status" value="1"/>
</dbReference>
<sequence length="97" mass="10934">MEVTDVRLRRVNTEGRMRAIASITLDHEFVVHDIRVIDGNNGLFVAMPSKRTPDGEFRDIAHPINSGTRSKIQDAVLTEYHRLGELEEVEFEEAGAS</sequence>
<comment type="function">
    <text evidence="1">Essential for sporulation. Interferes with or is a negative regulator of the pathway leading to asymmetric septation.</text>
</comment>
<comment type="similarity">
    <text evidence="1">Belongs to the SpoVG family.</text>
</comment>
<proteinExistence type="inferred from homology"/>
<keyword id="KW-0131">Cell cycle</keyword>
<keyword id="KW-0132">Cell division</keyword>
<keyword id="KW-0717">Septation</keyword>
<keyword id="KW-0749">Sporulation</keyword>
<evidence type="ECO:0000255" key="1">
    <source>
        <dbReference type="HAMAP-Rule" id="MF_00819"/>
    </source>
</evidence>
<reference key="1">
    <citation type="submission" date="2009-02" db="EMBL/GenBank/DDBJ databases">
        <title>Genome sequence of Bacillus cereus 03BB102.</title>
        <authorList>
            <person name="Dodson R.J."/>
            <person name="Jackson P."/>
            <person name="Munk A.C."/>
            <person name="Brettin T."/>
            <person name="Bruce D."/>
            <person name="Detter C."/>
            <person name="Tapia R."/>
            <person name="Han C."/>
            <person name="Sutton G."/>
            <person name="Sims D."/>
        </authorList>
    </citation>
    <scope>NUCLEOTIDE SEQUENCE [LARGE SCALE GENOMIC DNA]</scope>
    <source>
        <strain>03BB102</strain>
    </source>
</reference>